<organism>
    <name type="scientific">Methanococcus maripaludis (strain C7 / ATCC BAA-1331)</name>
    <dbReference type="NCBI Taxonomy" id="426368"/>
    <lineage>
        <taxon>Archaea</taxon>
        <taxon>Methanobacteriati</taxon>
        <taxon>Methanobacteriota</taxon>
        <taxon>Methanomada group</taxon>
        <taxon>Methanococci</taxon>
        <taxon>Methanococcales</taxon>
        <taxon>Methanococcaceae</taxon>
        <taxon>Methanococcus</taxon>
    </lineage>
</organism>
<protein>
    <recommendedName>
        <fullName evidence="1">Tetrahydromethanopterin S-methyltransferase subunit E</fullName>
        <ecNumber evidence="1">7.2.1.4</ecNumber>
    </recommendedName>
    <alternativeName>
        <fullName evidence="1">N5-methyltetrahydromethanopterin--coenzyme M methyltransferase subunit E</fullName>
    </alternativeName>
</protein>
<accession>A6VHE8</accession>
<name>MTRE_METM7</name>
<comment type="function">
    <text evidence="1">Part of a complex that catalyzes the formation of methyl-coenzyme M and tetrahydromethanopterin from coenzyme M and methyl-tetrahydromethanopterin. This is an energy-conserving, sodium-ion translocating step.</text>
</comment>
<comment type="catalytic activity">
    <reaction evidence="1">
        <text>5-methyl-5,6,7,8-tetrahydromethanopterin + coenzyme M + 2 Na(+)(in) = 5,6,7,8-tetrahydromethanopterin + methyl-coenzyme M + 2 Na(+)(out)</text>
        <dbReference type="Rhea" id="RHEA:53492"/>
        <dbReference type="ChEBI" id="CHEBI:29101"/>
        <dbReference type="ChEBI" id="CHEBI:58103"/>
        <dbReference type="ChEBI" id="CHEBI:58116"/>
        <dbReference type="ChEBI" id="CHEBI:58286"/>
        <dbReference type="ChEBI" id="CHEBI:58319"/>
        <dbReference type="EC" id="7.2.1.4"/>
    </reaction>
</comment>
<comment type="pathway">
    <text evidence="1">One-carbon metabolism; methanogenesis from CO(2); methyl-coenzyme M from 5,10-methylene-5,6,7,8-tetrahydromethanopterin: step 2/2.</text>
</comment>
<comment type="subunit">
    <text evidence="1">The complex is composed of 8 subunits; MtrA, MtrB, MtrC, MtrD, MtrE, MtrF, MtrG and MtrH.</text>
</comment>
<comment type="subcellular location">
    <subcellularLocation>
        <location evidence="1">Cell membrane</location>
        <topology evidence="1">Multi-pass membrane protein</topology>
    </subcellularLocation>
</comment>
<comment type="similarity">
    <text evidence="1">Belongs to the MtrE family.</text>
</comment>
<evidence type="ECO:0000255" key="1">
    <source>
        <dbReference type="HAMAP-Rule" id="MF_01098"/>
    </source>
</evidence>
<feature type="chain" id="PRO_1000064945" description="Tetrahydromethanopterin S-methyltransferase subunit E">
    <location>
        <begin position="1"/>
        <end position="299"/>
    </location>
</feature>
<feature type="transmembrane region" description="Helical" evidence="1">
    <location>
        <begin position="57"/>
        <end position="77"/>
    </location>
</feature>
<feature type="transmembrane region" description="Helical" evidence="1">
    <location>
        <begin position="80"/>
        <end position="100"/>
    </location>
</feature>
<feature type="transmembrane region" description="Helical" evidence="1">
    <location>
        <begin position="133"/>
        <end position="153"/>
    </location>
</feature>
<feature type="transmembrane region" description="Helical" evidence="1">
    <location>
        <begin position="158"/>
        <end position="178"/>
    </location>
</feature>
<feature type="transmembrane region" description="Helical" evidence="1">
    <location>
        <begin position="226"/>
        <end position="246"/>
    </location>
</feature>
<feature type="transmembrane region" description="Helical" evidence="1">
    <location>
        <begin position="262"/>
        <end position="282"/>
    </location>
</feature>
<reference key="1">
    <citation type="submission" date="2007-06" db="EMBL/GenBank/DDBJ databases">
        <title>Complete sequence of Methanococcus maripaludis C7.</title>
        <authorList>
            <consortium name="US DOE Joint Genome Institute"/>
            <person name="Copeland A."/>
            <person name="Lucas S."/>
            <person name="Lapidus A."/>
            <person name="Barry K."/>
            <person name="Glavina del Rio T."/>
            <person name="Dalin E."/>
            <person name="Tice H."/>
            <person name="Pitluck S."/>
            <person name="Clum A."/>
            <person name="Schmutz J."/>
            <person name="Larimer F."/>
            <person name="Land M."/>
            <person name="Hauser L."/>
            <person name="Kyrpides N."/>
            <person name="Anderson I."/>
            <person name="Sieprawska-Lupa M."/>
            <person name="Whitman W.B."/>
            <person name="Richardson P."/>
        </authorList>
    </citation>
    <scope>NUCLEOTIDE SEQUENCE [LARGE SCALE GENOMIC DNA]</scope>
    <source>
        <strain>C7 / ATCC BAA-1331</strain>
    </source>
</reference>
<dbReference type="EC" id="7.2.1.4" evidence="1"/>
<dbReference type="EMBL" id="CP000745">
    <property type="protein sequence ID" value="ABR65874.1"/>
    <property type="molecule type" value="Genomic_DNA"/>
</dbReference>
<dbReference type="SMR" id="A6VHE8"/>
<dbReference type="STRING" id="426368.MmarC7_0807"/>
<dbReference type="KEGG" id="mmz:MmarC7_0807"/>
<dbReference type="eggNOG" id="arCOG04870">
    <property type="taxonomic scope" value="Archaea"/>
</dbReference>
<dbReference type="HOGENOM" id="CLU_958513_0_0_2"/>
<dbReference type="OrthoDB" id="82302at2157"/>
<dbReference type="UniPathway" id="UPA00640">
    <property type="reaction ID" value="UER00698"/>
</dbReference>
<dbReference type="GO" id="GO:0005737">
    <property type="term" value="C:cytoplasm"/>
    <property type="evidence" value="ECO:0007669"/>
    <property type="project" value="InterPro"/>
</dbReference>
<dbReference type="GO" id="GO:0005886">
    <property type="term" value="C:plasma membrane"/>
    <property type="evidence" value="ECO:0007669"/>
    <property type="project" value="UniProtKB-SubCell"/>
</dbReference>
<dbReference type="GO" id="GO:0012506">
    <property type="term" value="C:vesicle membrane"/>
    <property type="evidence" value="ECO:0007669"/>
    <property type="project" value="InterPro"/>
</dbReference>
<dbReference type="GO" id="GO:0030269">
    <property type="term" value="F:tetrahydromethanopterin S-methyltransferase activity"/>
    <property type="evidence" value="ECO:0007669"/>
    <property type="project" value="UniProtKB-UniRule"/>
</dbReference>
<dbReference type="GO" id="GO:0019386">
    <property type="term" value="P:methanogenesis, from carbon dioxide"/>
    <property type="evidence" value="ECO:0007669"/>
    <property type="project" value="UniProtKB-UniRule"/>
</dbReference>
<dbReference type="GO" id="GO:0032259">
    <property type="term" value="P:methylation"/>
    <property type="evidence" value="ECO:0007669"/>
    <property type="project" value="UniProtKB-KW"/>
</dbReference>
<dbReference type="GO" id="GO:0006730">
    <property type="term" value="P:one-carbon metabolic process"/>
    <property type="evidence" value="ECO:0007669"/>
    <property type="project" value="UniProtKB-UniRule"/>
</dbReference>
<dbReference type="HAMAP" id="MF_01098">
    <property type="entry name" value="MtrE"/>
    <property type="match status" value="1"/>
</dbReference>
<dbReference type="InterPro" id="IPR005780">
    <property type="entry name" value="MeTrfase_E"/>
</dbReference>
<dbReference type="NCBIfam" id="TIGR01113">
    <property type="entry name" value="mtrE"/>
    <property type="match status" value="1"/>
</dbReference>
<dbReference type="Pfam" id="PF04206">
    <property type="entry name" value="MtrE"/>
    <property type="match status" value="1"/>
</dbReference>
<dbReference type="PIRSF" id="PIRSF016509">
    <property type="entry name" value="MtrE"/>
    <property type="match status" value="1"/>
</dbReference>
<gene>
    <name evidence="1" type="primary">mtrE</name>
    <name type="ordered locus">MmarC7_0807</name>
</gene>
<keyword id="KW-1003">Cell membrane</keyword>
<keyword id="KW-0472">Membrane</keyword>
<keyword id="KW-0484">Methanogenesis</keyword>
<keyword id="KW-0489">Methyltransferase</keyword>
<keyword id="KW-0554">One-carbon metabolism</keyword>
<keyword id="KW-0808">Transferase</keyword>
<keyword id="KW-1278">Translocase</keyword>
<keyword id="KW-0812">Transmembrane</keyword>
<keyword id="KW-1133">Transmembrane helix</keyword>
<proteinExistence type="inferred from homology"/>
<sequence>MDPTLISLGALALAGAAATVSGCAEDLESDVGSQSNPNSQVQLGPQMGNIHRYFNKAISGEPVSYGLYVAVAGTIAWALINAGLNAVLAIIVGSGVAAIVHGAYSVSAFLGRIVGQSKKFGQPVYMDVLTSHIGPIVGHGFIAVFTMTLAAYLATTALGNPFPLPLVALIFGITVGAIGSSTGDVHYGAEREYQKYPFGGGIPVANQGDIDIYAEYGVRNGLDSSYFCSRFGGPLTGLCFGLIIFLDGWRSILGNIVGGDLVTKTSIALLVGLLVVAVAAVINRKLEVYARNKYGPYRN</sequence>